<name>GLYA_XANE5</name>
<organism>
    <name type="scientific">Xanthomonas euvesicatoria pv. vesicatoria (strain 85-10)</name>
    <name type="common">Xanthomonas campestris pv. vesicatoria</name>
    <dbReference type="NCBI Taxonomy" id="316273"/>
    <lineage>
        <taxon>Bacteria</taxon>
        <taxon>Pseudomonadati</taxon>
        <taxon>Pseudomonadota</taxon>
        <taxon>Gammaproteobacteria</taxon>
        <taxon>Lysobacterales</taxon>
        <taxon>Lysobacteraceae</taxon>
        <taxon>Xanthomonas</taxon>
    </lineage>
</organism>
<protein>
    <recommendedName>
        <fullName evidence="1">Serine hydroxymethyltransferase</fullName>
        <shortName evidence="1">SHMT</shortName>
        <shortName evidence="1">Serine methylase</shortName>
        <ecNumber evidence="1">2.1.2.1</ecNumber>
    </recommendedName>
</protein>
<evidence type="ECO:0000255" key="1">
    <source>
        <dbReference type="HAMAP-Rule" id="MF_00051"/>
    </source>
</evidence>
<reference key="1">
    <citation type="journal article" date="2005" name="J. Bacteriol.">
        <title>Insights into genome plasticity and pathogenicity of the plant pathogenic Bacterium Xanthomonas campestris pv. vesicatoria revealed by the complete genome sequence.</title>
        <authorList>
            <person name="Thieme F."/>
            <person name="Koebnik R."/>
            <person name="Bekel T."/>
            <person name="Berger C."/>
            <person name="Boch J."/>
            <person name="Buettner D."/>
            <person name="Caldana C."/>
            <person name="Gaigalat L."/>
            <person name="Goesmann A."/>
            <person name="Kay S."/>
            <person name="Kirchner O."/>
            <person name="Lanz C."/>
            <person name="Linke B."/>
            <person name="McHardy A.C."/>
            <person name="Meyer F."/>
            <person name="Mittenhuber G."/>
            <person name="Nies D.H."/>
            <person name="Niesbach-Kloesgen U."/>
            <person name="Patschkowski T."/>
            <person name="Rueckert C."/>
            <person name="Rupp O."/>
            <person name="Schneiker S."/>
            <person name="Schuster S.C."/>
            <person name="Vorhoelter F.J."/>
            <person name="Weber E."/>
            <person name="Puehler A."/>
            <person name="Bonas U."/>
            <person name="Bartels D."/>
            <person name="Kaiser O."/>
        </authorList>
    </citation>
    <scope>NUCLEOTIDE SEQUENCE [LARGE SCALE GENOMIC DNA]</scope>
    <source>
        <strain>85-10</strain>
    </source>
</reference>
<accession>Q3BXI8</accession>
<keyword id="KW-0028">Amino-acid biosynthesis</keyword>
<keyword id="KW-0963">Cytoplasm</keyword>
<keyword id="KW-0554">One-carbon metabolism</keyword>
<keyword id="KW-0663">Pyridoxal phosphate</keyword>
<keyword id="KW-0808">Transferase</keyword>
<sequence>MFSRDVRLETYDPELAKAIAAEAGRQEDHVELIASENYCSPLVMEAQGSQLTNKYAEGYPGKRYYGGCEFVDIAEQLAIDRIKQVFGADYANVQPHSGSQANQAVYLALLQPGDTILGMSLAHGGHLTHGAKVNVSGKLFYAVQYGVNEQGLIDYDEVQRLATEHKPKMVVAGFSAYSQKIDWARFRAIADSVGAYLFVDMAHIAGLVAAGVYPSPMEHAHVVTSTTHKTLRGPRGGIIVAKGASEELQKKLQSIVFPGIQGGPLMHVIAAKAVAFKEALEPAFKTYQQQVVKNAQAMANTLIARGYKIVSGGTENHLMLVDMIGRDVSGKDAEAALGKAHITVNKNSVPNDPRSPFVTSGLRLGTPAITTRGYQEQDSIDLANWIADVLDAPTDEAVLAKVRDAVTAQCKRYPVYG</sequence>
<proteinExistence type="inferred from homology"/>
<feature type="chain" id="PRO_0000235050" description="Serine hydroxymethyltransferase">
    <location>
        <begin position="1"/>
        <end position="417"/>
    </location>
</feature>
<feature type="binding site" evidence="1">
    <location>
        <position position="121"/>
    </location>
    <ligand>
        <name>(6S)-5,6,7,8-tetrahydrofolate</name>
        <dbReference type="ChEBI" id="CHEBI:57453"/>
    </ligand>
</feature>
<feature type="binding site" evidence="1">
    <location>
        <begin position="125"/>
        <end position="127"/>
    </location>
    <ligand>
        <name>(6S)-5,6,7,8-tetrahydrofolate</name>
        <dbReference type="ChEBI" id="CHEBI:57453"/>
    </ligand>
</feature>
<feature type="binding site" evidence="1">
    <location>
        <begin position="355"/>
        <end position="357"/>
    </location>
    <ligand>
        <name>(6S)-5,6,7,8-tetrahydrofolate</name>
        <dbReference type="ChEBI" id="CHEBI:57453"/>
    </ligand>
</feature>
<feature type="site" description="Plays an important role in substrate specificity" evidence="1">
    <location>
        <position position="228"/>
    </location>
</feature>
<feature type="modified residue" description="N6-(pyridoxal phosphate)lysine" evidence="1">
    <location>
        <position position="229"/>
    </location>
</feature>
<comment type="function">
    <text evidence="1">Catalyzes the reversible interconversion of serine and glycine with tetrahydrofolate (THF) serving as the one-carbon carrier. This reaction serves as the major source of one-carbon groups required for the biosynthesis of purines, thymidylate, methionine, and other important biomolecules. Also exhibits THF-independent aldolase activity toward beta-hydroxyamino acids, producing glycine and aldehydes, via a retro-aldol mechanism.</text>
</comment>
<comment type="catalytic activity">
    <reaction evidence="1">
        <text>(6R)-5,10-methylene-5,6,7,8-tetrahydrofolate + glycine + H2O = (6S)-5,6,7,8-tetrahydrofolate + L-serine</text>
        <dbReference type="Rhea" id="RHEA:15481"/>
        <dbReference type="ChEBI" id="CHEBI:15377"/>
        <dbReference type="ChEBI" id="CHEBI:15636"/>
        <dbReference type="ChEBI" id="CHEBI:33384"/>
        <dbReference type="ChEBI" id="CHEBI:57305"/>
        <dbReference type="ChEBI" id="CHEBI:57453"/>
        <dbReference type="EC" id="2.1.2.1"/>
    </reaction>
</comment>
<comment type="cofactor">
    <cofactor evidence="1">
        <name>pyridoxal 5'-phosphate</name>
        <dbReference type="ChEBI" id="CHEBI:597326"/>
    </cofactor>
</comment>
<comment type="pathway">
    <text evidence="1">One-carbon metabolism; tetrahydrofolate interconversion.</text>
</comment>
<comment type="pathway">
    <text evidence="1">Amino-acid biosynthesis; glycine biosynthesis; glycine from L-serine: step 1/1.</text>
</comment>
<comment type="subunit">
    <text evidence="1">Homodimer.</text>
</comment>
<comment type="subcellular location">
    <subcellularLocation>
        <location evidence="1">Cytoplasm</location>
    </subcellularLocation>
</comment>
<comment type="similarity">
    <text evidence="1">Belongs to the SHMT family.</text>
</comment>
<dbReference type="EC" id="2.1.2.1" evidence="1"/>
<dbReference type="EMBL" id="AM039952">
    <property type="protein sequence ID" value="CAJ22425.1"/>
    <property type="molecule type" value="Genomic_DNA"/>
</dbReference>
<dbReference type="RefSeq" id="WP_011346398.1">
    <property type="nucleotide sequence ID" value="NZ_CP017190.1"/>
</dbReference>
<dbReference type="SMR" id="Q3BXI8"/>
<dbReference type="STRING" id="456327.BJD11_18840"/>
<dbReference type="KEGG" id="xcv:XCV0794"/>
<dbReference type="eggNOG" id="COG0112">
    <property type="taxonomic scope" value="Bacteria"/>
</dbReference>
<dbReference type="HOGENOM" id="CLU_022477_2_1_6"/>
<dbReference type="UniPathway" id="UPA00193"/>
<dbReference type="UniPathway" id="UPA00288">
    <property type="reaction ID" value="UER01023"/>
</dbReference>
<dbReference type="Proteomes" id="UP000007069">
    <property type="component" value="Chromosome"/>
</dbReference>
<dbReference type="GO" id="GO:0005829">
    <property type="term" value="C:cytosol"/>
    <property type="evidence" value="ECO:0007669"/>
    <property type="project" value="TreeGrafter"/>
</dbReference>
<dbReference type="GO" id="GO:0004372">
    <property type="term" value="F:glycine hydroxymethyltransferase activity"/>
    <property type="evidence" value="ECO:0007669"/>
    <property type="project" value="UniProtKB-UniRule"/>
</dbReference>
<dbReference type="GO" id="GO:0030170">
    <property type="term" value="F:pyridoxal phosphate binding"/>
    <property type="evidence" value="ECO:0007669"/>
    <property type="project" value="UniProtKB-UniRule"/>
</dbReference>
<dbReference type="GO" id="GO:0019264">
    <property type="term" value="P:glycine biosynthetic process from serine"/>
    <property type="evidence" value="ECO:0007669"/>
    <property type="project" value="UniProtKB-UniRule"/>
</dbReference>
<dbReference type="GO" id="GO:0035999">
    <property type="term" value="P:tetrahydrofolate interconversion"/>
    <property type="evidence" value="ECO:0007669"/>
    <property type="project" value="UniProtKB-UniRule"/>
</dbReference>
<dbReference type="CDD" id="cd00378">
    <property type="entry name" value="SHMT"/>
    <property type="match status" value="1"/>
</dbReference>
<dbReference type="FunFam" id="3.40.640.10:FF:000001">
    <property type="entry name" value="Serine hydroxymethyltransferase"/>
    <property type="match status" value="1"/>
</dbReference>
<dbReference type="FunFam" id="3.90.1150.10:FF:000003">
    <property type="entry name" value="Serine hydroxymethyltransferase"/>
    <property type="match status" value="1"/>
</dbReference>
<dbReference type="Gene3D" id="3.90.1150.10">
    <property type="entry name" value="Aspartate Aminotransferase, domain 1"/>
    <property type="match status" value="1"/>
</dbReference>
<dbReference type="Gene3D" id="3.40.640.10">
    <property type="entry name" value="Type I PLP-dependent aspartate aminotransferase-like (Major domain)"/>
    <property type="match status" value="1"/>
</dbReference>
<dbReference type="HAMAP" id="MF_00051">
    <property type="entry name" value="SHMT"/>
    <property type="match status" value="1"/>
</dbReference>
<dbReference type="InterPro" id="IPR015424">
    <property type="entry name" value="PyrdxlP-dep_Trfase"/>
</dbReference>
<dbReference type="InterPro" id="IPR015421">
    <property type="entry name" value="PyrdxlP-dep_Trfase_major"/>
</dbReference>
<dbReference type="InterPro" id="IPR015422">
    <property type="entry name" value="PyrdxlP-dep_Trfase_small"/>
</dbReference>
<dbReference type="InterPro" id="IPR001085">
    <property type="entry name" value="Ser_HO-MeTrfase"/>
</dbReference>
<dbReference type="InterPro" id="IPR049943">
    <property type="entry name" value="Ser_HO-MeTrfase-like"/>
</dbReference>
<dbReference type="InterPro" id="IPR019798">
    <property type="entry name" value="Ser_HO-MeTrfase_PLP_BS"/>
</dbReference>
<dbReference type="InterPro" id="IPR039429">
    <property type="entry name" value="SHMT-like_dom"/>
</dbReference>
<dbReference type="NCBIfam" id="NF000586">
    <property type="entry name" value="PRK00011.1"/>
    <property type="match status" value="1"/>
</dbReference>
<dbReference type="PANTHER" id="PTHR11680">
    <property type="entry name" value="SERINE HYDROXYMETHYLTRANSFERASE"/>
    <property type="match status" value="1"/>
</dbReference>
<dbReference type="PANTHER" id="PTHR11680:SF50">
    <property type="entry name" value="SERINE HYDROXYMETHYLTRANSFERASE"/>
    <property type="match status" value="1"/>
</dbReference>
<dbReference type="Pfam" id="PF00464">
    <property type="entry name" value="SHMT"/>
    <property type="match status" value="1"/>
</dbReference>
<dbReference type="PIRSF" id="PIRSF000412">
    <property type="entry name" value="SHMT"/>
    <property type="match status" value="1"/>
</dbReference>
<dbReference type="SUPFAM" id="SSF53383">
    <property type="entry name" value="PLP-dependent transferases"/>
    <property type="match status" value="1"/>
</dbReference>
<dbReference type="PROSITE" id="PS00096">
    <property type="entry name" value="SHMT"/>
    <property type="match status" value="1"/>
</dbReference>
<gene>
    <name evidence="1" type="primary">glyA</name>
    <name type="ordered locus">XCV0794</name>
</gene>